<organism>
    <name type="scientific">Bacillus thuringiensis (strain Al Hakam)</name>
    <dbReference type="NCBI Taxonomy" id="412694"/>
    <lineage>
        <taxon>Bacteria</taxon>
        <taxon>Bacillati</taxon>
        <taxon>Bacillota</taxon>
        <taxon>Bacilli</taxon>
        <taxon>Bacillales</taxon>
        <taxon>Bacillaceae</taxon>
        <taxon>Bacillus</taxon>
        <taxon>Bacillus cereus group</taxon>
    </lineage>
</organism>
<reference key="1">
    <citation type="journal article" date="2007" name="J. Bacteriol.">
        <title>The complete genome sequence of Bacillus thuringiensis Al Hakam.</title>
        <authorList>
            <person name="Challacombe J.F."/>
            <person name="Altherr M.R."/>
            <person name="Xie G."/>
            <person name="Bhotika S.S."/>
            <person name="Brown N."/>
            <person name="Bruce D."/>
            <person name="Campbell C.S."/>
            <person name="Campbell M.L."/>
            <person name="Chen J."/>
            <person name="Chertkov O."/>
            <person name="Cleland C."/>
            <person name="Dimitrijevic M."/>
            <person name="Doggett N.A."/>
            <person name="Fawcett J.J."/>
            <person name="Glavina T."/>
            <person name="Goodwin L.A."/>
            <person name="Green L.D."/>
            <person name="Han C.S."/>
            <person name="Hill K.K."/>
            <person name="Hitchcock P."/>
            <person name="Jackson P.J."/>
            <person name="Keim P."/>
            <person name="Kewalramani A.R."/>
            <person name="Longmire J."/>
            <person name="Lucas S."/>
            <person name="Malfatti S."/>
            <person name="Martinez D."/>
            <person name="McMurry K."/>
            <person name="Meincke L.J."/>
            <person name="Misra M."/>
            <person name="Moseman B.L."/>
            <person name="Mundt M."/>
            <person name="Munk A.C."/>
            <person name="Okinaka R.T."/>
            <person name="Parson-Quintana B."/>
            <person name="Reilly L.P."/>
            <person name="Richardson P."/>
            <person name="Robinson D.L."/>
            <person name="Saunders E."/>
            <person name="Tapia R."/>
            <person name="Tesmer J.G."/>
            <person name="Thayer N."/>
            <person name="Thompson L.S."/>
            <person name="Tice H."/>
            <person name="Ticknor L.O."/>
            <person name="Wills P.L."/>
            <person name="Gilna P."/>
            <person name="Brettin T.S."/>
        </authorList>
    </citation>
    <scope>NUCLEOTIDE SEQUENCE [LARGE SCALE GENOMIC DNA]</scope>
    <source>
        <strain>Al Hakam</strain>
    </source>
</reference>
<comment type="function">
    <text evidence="1">Displays ATPase and GTPase activities.</text>
</comment>
<comment type="similarity">
    <text evidence="1">Belongs to the RapZ-like family.</text>
</comment>
<name>Y4646_BACAH</name>
<dbReference type="EMBL" id="CP000485">
    <property type="protein sequence ID" value="ABK87835.1"/>
    <property type="molecule type" value="Genomic_DNA"/>
</dbReference>
<dbReference type="SMR" id="A0RKU2"/>
<dbReference type="KEGG" id="btl:BALH_4646"/>
<dbReference type="HOGENOM" id="CLU_059558_0_0_9"/>
<dbReference type="GO" id="GO:0005524">
    <property type="term" value="F:ATP binding"/>
    <property type="evidence" value="ECO:0007669"/>
    <property type="project" value="UniProtKB-UniRule"/>
</dbReference>
<dbReference type="GO" id="GO:0005525">
    <property type="term" value="F:GTP binding"/>
    <property type="evidence" value="ECO:0007669"/>
    <property type="project" value="UniProtKB-UniRule"/>
</dbReference>
<dbReference type="Gene3D" id="3.40.50.300">
    <property type="entry name" value="P-loop containing nucleotide triphosphate hydrolases"/>
    <property type="match status" value="1"/>
</dbReference>
<dbReference type="HAMAP" id="MF_00636">
    <property type="entry name" value="RapZ_like"/>
    <property type="match status" value="1"/>
</dbReference>
<dbReference type="InterPro" id="IPR027417">
    <property type="entry name" value="P-loop_NTPase"/>
</dbReference>
<dbReference type="InterPro" id="IPR005337">
    <property type="entry name" value="RapZ-like"/>
</dbReference>
<dbReference type="InterPro" id="IPR053930">
    <property type="entry name" value="RapZ-like_N"/>
</dbReference>
<dbReference type="InterPro" id="IPR053931">
    <property type="entry name" value="RapZ_C"/>
</dbReference>
<dbReference type="NCBIfam" id="NF003828">
    <property type="entry name" value="PRK05416.1"/>
    <property type="match status" value="1"/>
</dbReference>
<dbReference type="PANTHER" id="PTHR30448">
    <property type="entry name" value="RNASE ADAPTER PROTEIN RAPZ"/>
    <property type="match status" value="1"/>
</dbReference>
<dbReference type="PANTHER" id="PTHR30448:SF0">
    <property type="entry name" value="RNASE ADAPTER PROTEIN RAPZ"/>
    <property type="match status" value="1"/>
</dbReference>
<dbReference type="Pfam" id="PF22740">
    <property type="entry name" value="PapZ_C"/>
    <property type="match status" value="1"/>
</dbReference>
<dbReference type="Pfam" id="PF03668">
    <property type="entry name" value="RapZ-like_N"/>
    <property type="match status" value="1"/>
</dbReference>
<dbReference type="PIRSF" id="PIRSF005052">
    <property type="entry name" value="P-loopkin"/>
    <property type="match status" value="1"/>
</dbReference>
<dbReference type="SUPFAM" id="SSF52540">
    <property type="entry name" value="P-loop containing nucleoside triphosphate hydrolases"/>
    <property type="match status" value="1"/>
</dbReference>
<gene>
    <name type="ordered locus">BALH_4646</name>
</gene>
<accession>A0RKU2</accession>
<protein>
    <recommendedName>
        <fullName evidence="1">Nucleotide-binding protein BALH_4646</fullName>
    </recommendedName>
</protein>
<feature type="chain" id="PRO_1000056806" description="Nucleotide-binding protein BALH_4646">
    <location>
        <begin position="1"/>
        <end position="293"/>
    </location>
</feature>
<feature type="binding site" evidence="1">
    <location>
        <begin position="14"/>
        <end position="21"/>
    </location>
    <ligand>
        <name>ATP</name>
        <dbReference type="ChEBI" id="CHEBI:30616"/>
    </ligand>
</feature>
<feature type="binding site" evidence="1">
    <location>
        <begin position="65"/>
        <end position="68"/>
    </location>
    <ligand>
        <name>GTP</name>
        <dbReference type="ChEBI" id="CHEBI:37565"/>
    </ligand>
</feature>
<sequence>MTENNDIKMVIITGMSGAGKTVALQSFEDLGYFCVDNLPPMLLPKFIELMADSKGKMNKVALGVDLRGREFFEHLWGALDDLSERTWIIPHILFLDAKDSTLVTRYKETRRSHPLAPTGLPLKGIEIERSLLTDMKARANIVLDTSDLKPKELREKIVHLFSTETEQAFRVNVMSFGFKYGIPIDADLVFDVRFLPNPYYIPHMKPLTGLDEEVSSYVLKFNETHKFLEKLTDLITFMLPHYKREGKSQLVIAIGCTGGQHRSVTLTEYLGKHLKPEYSVHVSHRDVEKRKGH</sequence>
<keyword id="KW-0067">ATP-binding</keyword>
<keyword id="KW-0342">GTP-binding</keyword>
<keyword id="KW-0547">Nucleotide-binding</keyword>
<evidence type="ECO:0000255" key="1">
    <source>
        <dbReference type="HAMAP-Rule" id="MF_00636"/>
    </source>
</evidence>
<proteinExistence type="inferred from homology"/>